<protein>
    <recommendedName>
        <fullName evidence="1">ATP synthase subunit a, chloroplastic</fullName>
    </recommendedName>
    <alternativeName>
        <fullName evidence="1">ATP synthase F0 sector subunit a</fullName>
    </alternativeName>
    <alternativeName>
        <fullName evidence="1">F-ATPase subunit IV</fullName>
    </alternativeName>
</protein>
<keyword id="KW-0066">ATP synthesis</keyword>
<keyword id="KW-0138">CF(0)</keyword>
<keyword id="KW-0150">Chloroplast</keyword>
<keyword id="KW-0375">Hydrogen ion transport</keyword>
<keyword id="KW-0406">Ion transport</keyword>
<keyword id="KW-0472">Membrane</keyword>
<keyword id="KW-0934">Plastid</keyword>
<keyword id="KW-0793">Thylakoid</keyword>
<keyword id="KW-0812">Transmembrane</keyword>
<keyword id="KW-1133">Transmembrane helix</keyword>
<keyword id="KW-0813">Transport</keyword>
<organism>
    <name type="scientific">Draba nemorosa</name>
    <name type="common">Woodland whitlowgrass</name>
    <dbReference type="NCBI Taxonomy" id="171822"/>
    <lineage>
        <taxon>Eukaryota</taxon>
        <taxon>Viridiplantae</taxon>
        <taxon>Streptophyta</taxon>
        <taxon>Embryophyta</taxon>
        <taxon>Tracheophyta</taxon>
        <taxon>Spermatophyta</taxon>
        <taxon>Magnoliopsida</taxon>
        <taxon>eudicotyledons</taxon>
        <taxon>Gunneridae</taxon>
        <taxon>Pentapetalae</taxon>
        <taxon>rosids</taxon>
        <taxon>malvids</taxon>
        <taxon>Brassicales</taxon>
        <taxon>Brassicaceae</taxon>
        <taxon>Arabideae</taxon>
        <taxon>Draba</taxon>
    </lineage>
</organism>
<accession>A4QL07</accession>
<feature type="chain" id="PRO_0000362553" description="ATP synthase subunit a, chloroplastic">
    <location>
        <begin position="1"/>
        <end position="249"/>
    </location>
</feature>
<feature type="transmembrane region" description="Helical" evidence="1">
    <location>
        <begin position="40"/>
        <end position="60"/>
    </location>
</feature>
<feature type="transmembrane region" description="Helical" evidence="1">
    <location>
        <begin position="97"/>
        <end position="117"/>
    </location>
</feature>
<feature type="transmembrane region" description="Helical" evidence="1">
    <location>
        <begin position="136"/>
        <end position="156"/>
    </location>
</feature>
<feature type="transmembrane region" description="Helical" evidence="1">
    <location>
        <begin position="201"/>
        <end position="221"/>
    </location>
</feature>
<feature type="transmembrane region" description="Helical" evidence="1">
    <location>
        <begin position="222"/>
        <end position="242"/>
    </location>
</feature>
<dbReference type="EMBL" id="AP009373">
    <property type="protein sequence ID" value="BAF50362.1"/>
    <property type="molecule type" value="Genomic_DNA"/>
</dbReference>
<dbReference type="RefSeq" id="YP_001123538.1">
    <property type="nucleotide sequence ID" value="NC_009272.1"/>
</dbReference>
<dbReference type="SMR" id="A4QL07"/>
<dbReference type="GeneID" id="4964762"/>
<dbReference type="GO" id="GO:0009535">
    <property type="term" value="C:chloroplast thylakoid membrane"/>
    <property type="evidence" value="ECO:0007669"/>
    <property type="project" value="UniProtKB-SubCell"/>
</dbReference>
<dbReference type="GO" id="GO:0005886">
    <property type="term" value="C:plasma membrane"/>
    <property type="evidence" value="ECO:0007669"/>
    <property type="project" value="UniProtKB-UniRule"/>
</dbReference>
<dbReference type="GO" id="GO:0045259">
    <property type="term" value="C:proton-transporting ATP synthase complex"/>
    <property type="evidence" value="ECO:0007669"/>
    <property type="project" value="UniProtKB-KW"/>
</dbReference>
<dbReference type="GO" id="GO:0046933">
    <property type="term" value="F:proton-transporting ATP synthase activity, rotational mechanism"/>
    <property type="evidence" value="ECO:0007669"/>
    <property type="project" value="UniProtKB-UniRule"/>
</dbReference>
<dbReference type="CDD" id="cd00310">
    <property type="entry name" value="ATP-synt_Fo_a_6"/>
    <property type="match status" value="1"/>
</dbReference>
<dbReference type="FunFam" id="1.20.120.220:FF:000001">
    <property type="entry name" value="ATP synthase subunit a, chloroplastic"/>
    <property type="match status" value="1"/>
</dbReference>
<dbReference type="Gene3D" id="1.20.120.220">
    <property type="entry name" value="ATP synthase, F0 complex, subunit A"/>
    <property type="match status" value="1"/>
</dbReference>
<dbReference type="HAMAP" id="MF_01393">
    <property type="entry name" value="ATP_synth_a_bact"/>
    <property type="match status" value="1"/>
</dbReference>
<dbReference type="InterPro" id="IPR045082">
    <property type="entry name" value="ATP_syn_F0_a_bact/chloroplast"/>
</dbReference>
<dbReference type="InterPro" id="IPR000568">
    <property type="entry name" value="ATP_synth_F0_asu"/>
</dbReference>
<dbReference type="InterPro" id="IPR023011">
    <property type="entry name" value="ATP_synth_F0_asu_AS"/>
</dbReference>
<dbReference type="InterPro" id="IPR035908">
    <property type="entry name" value="F0_ATP_A_sf"/>
</dbReference>
<dbReference type="NCBIfam" id="TIGR01131">
    <property type="entry name" value="ATP_synt_6_or_A"/>
    <property type="match status" value="1"/>
</dbReference>
<dbReference type="PANTHER" id="PTHR42823">
    <property type="entry name" value="ATP SYNTHASE SUBUNIT A, CHLOROPLASTIC"/>
    <property type="match status" value="1"/>
</dbReference>
<dbReference type="PANTHER" id="PTHR42823:SF3">
    <property type="entry name" value="ATP SYNTHASE SUBUNIT A, CHLOROPLASTIC"/>
    <property type="match status" value="1"/>
</dbReference>
<dbReference type="Pfam" id="PF00119">
    <property type="entry name" value="ATP-synt_A"/>
    <property type="match status" value="1"/>
</dbReference>
<dbReference type="PRINTS" id="PR00123">
    <property type="entry name" value="ATPASEA"/>
</dbReference>
<dbReference type="SUPFAM" id="SSF81336">
    <property type="entry name" value="F1F0 ATP synthase subunit A"/>
    <property type="match status" value="1"/>
</dbReference>
<dbReference type="PROSITE" id="PS00449">
    <property type="entry name" value="ATPASE_A"/>
    <property type="match status" value="1"/>
</dbReference>
<comment type="function">
    <text evidence="1">Key component of the proton channel; it plays a direct role in the translocation of protons across the membrane.</text>
</comment>
<comment type="subunit">
    <text evidence="1">F-type ATPases have 2 components, CF(1) - the catalytic core - and CF(0) - the membrane proton channel. CF(1) has five subunits: alpha(3), beta(3), gamma(1), delta(1), epsilon(1). CF(0) has four main subunits: a, b, b' and c.</text>
</comment>
<comment type="subcellular location">
    <subcellularLocation>
        <location evidence="1">Plastid</location>
        <location evidence="1">Chloroplast thylakoid membrane</location>
        <topology evidence="1">Multi-pass membrane protein</topology>
    </subcellularLocation>
</comment>
<comment type="similarity">
    <text evidence="1">Belongs to the ATPase A chain family.</text>
</comment>
<gene>
    <name evidence="1" type="primary">atpI</name>
</gene>
<sequence length="249" mass="27323">MTVLSCSINTLIKEGLYEISGVEVGQHFYWQIGGFQVHAQVLITSWVVIAILLGSAVLAVRNPQTIPTDGQNFFEFVLEFIRDVSQTQIGEEYGPWVPFIGTLFLFIFVSNWSGALLPWKIIQLPQGELAAPTNDINTTVALALLTSVAYFYAGLSKKGLGYFSKYIQPTPILLPINILEDFTKPLSLSFRLFGNILADELVVVVLVSLVPLVVPIPVMFLGLFTSGIQALIFATLAAAYIGESMEGHH</sequence>
<geneLocation type="chloroplast"/>
<reference key="1">
    <citation type="submission" date="2007-03" db="EMBL/GenBank/DDBJ databases">
        <title>Sequencing analysis of Draba nemoroza chloroplast DNA.</title>
        <authorList>
            <person name="Hosouchi T."/>
            <person name="Tsuruoka H."/>
            <person name="Kotani H."/>
        </authorList>
    </citation>
    <scope>NUCLEOTIDE SEQUENCE [LARGE SCALE GENOMIC DNA]</scope>
</reference>
<proteinExistence type="inferred from homology"/>
<evidence type="ECO:0000255" key="1">
    <source>
        <dbReference type="HAMAP-Rule" id="MF_01393"/>
    </source>
</evidence>
<name>ATPI_DRANE</name>